<keyword id="KW-0010">Activator</keyword>
<keyword id="KW-0238">DNA-binding</keyword>
<keyword id="KW-0539">Nucleus</keyword>
<keyword id="KW-1185">Reference proteome</keyword>
<keyword id="KW-0804">Transcription</keyword>
<keyword id="KW-0805">Transcription regulation</keyword>
<accession>Q54S29</accession>
<feature type="chain" id="PRO_0000371334" description="Nuclear transcription factor Y subunit alpha">
    <location>
        <begin position="1"/>
        <end position="517"/>
    </location>
</feature>
<feature type="DNA-binding region" description="NFYA/HAP2-type" evidence="2">
    <location>
        <begin position="262"/>
        <end position="287"/>
    </location>
</feature>
<feature type="region of interest" description="Disordered" evidence="3">
    <location>
        <begin position="1"/>
        <end position="95"/>
    </location>
</feature>
<feature type="region of interest" description="Disordered" evidence="3">
    <location>
        <begin position="121"/>
        <end position="183"/>
    </location>
</feature>
<feature type="region of interest" description="Disordered" evidence="3">
    <location>
        <begin position="252"/>
        <end position="281"/>
    </location>
</feature>
<feature type="region of interest" description="Disordered" evidence="3">
    <location>
        <begin position="304"/>
        <end position="517"/>
    </location>
</feature>
<feature type="short sequence motif" description="Subunit association domain (SAD)">
    <location>
        <begin position="232"/>
        <end position="255"/>
    </location>
</feature>
<feature type="compositionally biased region" description="Polar residues" evidence="3">
    <location>
        <begin position="1"/>
        <end position="11"/>
    </location>
</feature>
<feature type="compositionally biased region" description="Low complexity" evidence="3">
    <location>
        <begin position="26"/>
        <end position="81"/>
    </location>
</feature>
<feature type="compositionally biased region" description="Low complexity" evidence="3">
    <location>
        <begin position="126"/>
        <end position="183"/>
    </location>
</feature>
<feature type="compositionally biased region" description="Low complexity" evidence="3">
    <location>
        <begin position="304"/>
        <end position="345"/>
    </location>
</feature>
<feature type="compositionally biased region" description="Acidic residues" evidence="3">
    <location>
        <begin position="359"/>
        <end position="371"/>
    </location>
</feature>
<feature type="compositionally biased region" description="Low complexity" evidence="3">
    <location>
        <begin position="377"/>
        <end position="388"/>
    </location>
</feature>
<feature type="compositionally biased region" description="Low complexity" evidence="3">
    <location>
        <begin position="408"/>
        <end position="423"/>
    </location>
</feature>
<feature type="compositionally biased region" description="Polar residues" evidence="3">
    <location>
        <begin position="438"/>
        <end position="447"/>
    </location>
</feature>
<feature type="compositionally biased region" description="Low complexity" evidence="3">
    <location>
        <begin position="448"/>
        <end position="517"/>
    </location>
</feature>
<evidence type="ECO:0000250" key="1"/>
<evidence type="ECO:0000255" key="2">
    <source>
        <dbReference type="PROSITE-ProRule" id="PRU00966"/>
    </source>
</evidence>
<evidence type="ECO:0000256" key="3">
    <source>
        <dbReference type="SAM" id="MobiDB-lite"/>
    </source>
</evidence>
<proteinExistence type="inferred from homology"/>
<gene>
    <name type="primary">nfyA</name>
    <name type="ORF">DDB_G0282697</name>
</gene>
<comment type="function">
    <text evidence="1">Component of the NF-Y/HAP transcription factor complex. The NF-Y complex stimulates the transcription of various genes by recognizing and binding to a CCAAT motif in promoters (By similarity).</text>
</comment>
<comment type="subunit">
    <text evidence="1">Heterotrimeric transcription factor composed of three components, nfyA, nfyB and nfyC. nfyB and nfyC must interact and dimerize for nfyA association and DNA binding (By similarity).</text>
</comment>
<comment type="subcellular location">
    <subcellularLocation>
        <location evidence="2">Nucleus</location>
    </subcellularLocation>
</comment>
<comment type="similarity">
    <text evidence="2">Belongs to the NFYA/HAP2 subunit family.</text>
</comment>
<dbReference type="EMBL" id="AAFI02000047">
    <property type="protein sequence ID" value="EAL66208.1"/>
    <property type="molecule type" value="Genomic_DNA"/>
</dbReference>
<dbReference type="RefSeq" id="XP_640210.1">
    <property type="nucleotide sequence ID" value="XM_635118.1"/>
</dbReference>
<dbReference type="SMR" id="Q54S29"/>
<dbReference type="FunCoup" id="Q54S29">
    <property type="interactions" value="38"/>
</dbReference>
<dbReference type="STRING" id="44689.Q54S29"/>
<dbReference type="PaxDb" id="44689-DDB0220100"/>
<dbReference type="EnsemblProtists" id="EAL66208">
    <property type="protein sequence ID" value="EAL66208"/>
    <property type="gene ID" value="DDB_G0282697"/>
</dbReference>
<dbReference type="GeneID" id="8623750"/>
<dbReference type="KEGG" id="ddi:DDB_G0282697"/>
<dbReference type="dictyBase" id="DDB_G0282697">
    <property type="gene designation" value="nfyA"/>
</dbReference>
<dbReference type="VEuPathDB" id="AmoebaDB:DDB_G0282697"/>
<dbReference type="eggNOG" id="KOG1561">
    <property type="taxonomic scope" value="Eukaryota"/>
</dbReference>
<dbReference type="HOGENOM" id="CLU_527271_0_0_1"/>
<dbReference type="InParanoid" id="Q54S29"/>
<dbReference type="OMA" id="WQSEARI"/>
<dbReference type="PRO" id="PR:Q54S29"/>
<dbReference type="Proteomes" id="UP000002195">
    <property type="component" value="Chromosome 3"/>
</dbReference>
<dbReference type="GO" id="GO:0016602">
    <property type="term" value="C:CCAAT-binding factor complex"/>
    <property type="evidence" value="ECO:0000250"/>
    <property type="project" value="dictyBase"/>
</dbReference>
<dbReference type="GO" id="GO:0003677">
    <property type="term" value="F:DNA binding"/>
    <property type="evidence" value="ECO:0000250"/>
    <property type="project" value="dictyBase"/>
</dbReference>
<dbReference type="GO" id="GO:0000981">
    <property type="term" value="F:DNA-binding transcription factor activity, RNA polymerase II-specific"/>
    <property type="evidence" value="ECO:0000318"/>
    <property type="project" value="GO_Central"/>
</dbReference>
<dbReference type="GO" id="GO:0006355">
    <property type="term" value="P:regulation of DNA-templated transcription"/>
    <property type="evidence" value="ECO:0000250"/>
    <property type="project" value="dictyBase"/>
</dbReference>
<dbReference type="GO" id="GO:0006357">
    <property type="term" value="P:regulation of transcription by RNA polymerase II"/>
    <property type="evidence" value="ECO:0000318"/>
    <property type="project" value="GO_Central"/>
</dbReference>
<dbReference type="Gene3D" id="6.10.250.2430">
    <property type="match status" value="1"/>
</dbReference>
<dbReference type="InterPro" id="IPR018362">
    <property type="entry name" value="CCAAT-binding_factor_CS"/>
</dbReference>
<dbReference type="InterPro" id="IPR001289">
    <property type="entry name" value="NFYA"/>
</dbReference>
<dbReference type="PANTHER" id="PTHR12632">
    <property type="entry name" value="TRANSCRIPTION FACTOR NF-Y ALPHA-RELATED"/>
    <property type="match status" value="1"/>
</dbReference>
<dbReference type="Pfam" id="PF02045">
    <property type="entry name" value="CBFB_NFYA"/>
    <property type="match status" value="1"/>
</dbReference>
<dbReference type="PRINTS" id="PR00616">
    <property type="entry name" value="CCAATSUBUNTB"/>
</dbReference>
<dbReference type="SMART" id="SM00521">
    <property type="entry name" value="CBF"/>
    <property type="match status" value="1"/>
</dbReference>
<dbReference type="PROSITE" id="PS00686">
    <property type="entry name" value="NFYA_HAP2_1"/>
    <property type="match status" value="1"/>
</dbReference>
<dbReference type="PROSITE" id="PS51152">
    <property type="entry name" value="NFYA_HAP2_2"/>
    <property type="match status" value="1"/>
</dbReference>
<organism>
    <name type="scientific">Dictyostelium discoideum</name>
    <name type="common">Social amoeba</name>
    <dbReference type="NCBI Taxonomy" id="44689"/>
    <lineage>
        <taxon>Eukaryota</taxon>
        <taxon>Amoebozoa</taxon>
        <taxon>Evosea</taxon>
        <taxon>Eumycetozoa</taxon>
        <taxon>Dictyostelia</taxon>
        <taxon>Dictyosteliales</taxon>
        <taxon>Dictyosteliaceae</taxon>
        <taxon>Dictyostelium</taxon>
    </lineage>
</organism>
<reference key="1">
    <citation type="journal article" date="2005" name="Nature">
        <title>The genome of the social amoeba Dictyostelium discoideum.</title>
        <authorList>
            <person name="Eichinger L."/>
            <person name="Pachebat J.A."/>
            <person name="Gloeckner G."/>
            <person name="Rajandream M.A."/>
            <person name="Sucgang R."/>
            <person name="Berriman M."/>
            <person name="Song J."/>
            <person name="Olsen R."/>
            <person name="Szafranski K."/>
            <person name="Xu Q."/>
            <person name="Tunggal B."/>
            <person name="Kummerfeld S."/>
            <person name="Madera M."/>
            <person name="Konfortov B.A."/>
            <person name="Rivero F."/>
            <person name="Bankier A.T."/>
            <person name="Lehmann R."/>
            <person name="Hamlin N."/>
            <person name="Davies R."/>
            <person name="Gaudet P."/>
            <person name="Fey P."/>
            <person name="Pilcher K."/>
            <person name="Chen G."/>
            <person name="Saunders D."/>
            <person name="Sodergren E.J."/>
            <person name="Davis P."/>
            <person name="Kerhornou A."/>
            <person name="Nie X."/>
            <person name="Hall N."/>
            <person name="Anjard C."/>
            <person name="Hemphill L."/>
            <person name="Bason N."/>
            <person name="Farbrother P."/>
            <person name="Desany B."/>
            <person name="Just E."/>
            <person name="Morio T."/>
            <person name="Rost R."/>
            <person name="Churcher C.M."/>
            <person name="Cooper J."/>
            <person name="Haydock S."/>
            <person name="van Driessche N."/>
            <person name="Cronin A."/>
            <person name="Goodhead I."/>
            <person name="Muzny D.M."/>
            <person name="Mourier T."/>
            <person name="Pain A."/>
            <person name="Lu M."/>
            <person name="Harper D."/>
            <person name="Lindsay R."/>
            <person name="Hauser H."/>
            <person name="James K.D."/>
            <person name="Quiles M."/>
            <person name="Madan Babu M."/>
            <person name="Saito T."/>
            <person name="Buchrieser C."/>
            <person name="Wardroper A."/>
            <person name="Felder M."/>
            <person name="Thangavelu M."/>
            <person name="Johnson D."/>
            <person name="Knights A."/>
            <person name="Loulseged H."/>
            <person name="Mungall K.L."/>
            <person name="Oliver K."/>
            <person name="Price C."/>
            <person name="Quail M.A."/>
            <person name="Urushihara H."/>
            <person name="Hernandez J."/>
            <person name="Rabbinowitsch E."/>
            <person name="Steffen D."/>
            <person name="Sanders M."/>
            <person name="Ma J."/>
            <person name="Kohara Y."/>
            <person name="Sharp S."/>
            <person name="Simmonds M.N."/>
            <person name="Spiegler S."/>
            <person name="Tivey A."/>
            <person name="Sugano S."/>
            <person name="White B."/>
            <person name="Walker D."/>
            <person name="Woodward J.R."/>
            <person name="Winckler T."/>
            <person name="Tanaka Y."/>
            <person name="Shaulsky G."/>
            <person name="Schleicher M."/>
            <person name="Weinstock G.M."/>
            <person name="Rosenthal A."/>
            <person name="Cox E.C."/>
            <person name="Chisholm R.L."/>
            <person name="Gibbs R.A."/>
            <person name="Loomis W.F."/>
            <person name="Platzer M."/>
            <person name="Kay R.R."/>
            <person name="Williams J.G."/>
            <person name="Dear P.H."/>
            <person name="Noegel A.A."/>
            <person name="Barrell B.G."/>
            <person name="Kuspa A."/>
        </authorList>
    </citation>
    <scope>NUCLEOTIDE SEQUENCE [LARGE SCALE GENOMIC DNA]</scope>
    <source>
        <strain>AX4</strain>
    </source>
</reference>
<name>NFYA_DICDI</name>
<protein>
    <recommendedName>
        <fullName>Nuclear transcription factor Y subunit alpha</fullName>
    </recommendedName>
    <alternativeName>
        <fullName>CAAT box DNA-binding protein subunit A</fullName>
    </alternativeName>
    <alternativeName>
        <fullName>Nuclear transcription factor Y subunit A</fullName>
        <shortName>NF-YA</shortName>
    </alternativeName>
</protein>
<sequence length="517" mass="57279">MNQINYLTSERNFLPPTDRDILNLGNNSSNSNNNSSSSNNNNNNNNNNNNNNNNNNNNSNSNSNSNNNNNNNSNNNNSSSSPDHMSLHSNGMDIHHNQQNHHYQNIQHQPHHFQQNYDERRIDYGNNNNNNNTNSMNNSNNNSNNNSNNNSNNNNNNNNNNNNNNNNNNSNNNNNSNNNNFNYNIKQQPQQTLQNQIVNMNGNIITSNGNHHYPTPHMLYARMAEIVEEPLYVNAKQYNRILKRRAARAKLESENKLPKTRKAYQHESRHQHAIRRQRGCGGRFLTKADQAKLDAQNAANAAAAAANPNASSTSTTTSNITNNNNNNNNNNNTNNNNNNNNTNVNGSGGSGGSNKIASSDDDIENDVENDSDSANIKNNSNSPNQSSSSPPPSKSKVVKKSNTINKRNNNINNNNNNNNNNNNEKTQPISSSSSSSSPLLNNGHIQAQQNQSPSSSPSQNLPPLNFSNNINNNINNNGNPTNFNNNNPNNNPNNNNNNNPNNNSFLPPLSNFSNNRS</sequence>